<feature type="chain" id="PRO_0000169178" description="Uncharacterized protein YfbK">
    <location>
        <begin position="1"/>
        <end position="575"/>
    </location>
</feature>
<feature type="domain" description="VWFA" evidence="1">
    <location>
        <begin position="216"/>
        <end position="394"/>
    </location>
</feature>
<feature type="region of interest" description="Disordered" evidence="2">
    <location>
        <begin position="19"/>
        <end position="42"/>
    </location>
</feature>
<feature type="compositionally biased region" description="Low complexity" evidence="2">
    <location>
        <begin position="28"/>
        <end position="42"/>
    </location>
</feature>
<evidence type="ECO:0000255" key="1">
    <source>
        <dbReference type="PROSITE-ProRule" id="PRU00219"/>
    </source>
</evidence>
<evidence type="ECO:0000256" key="2">
    <source>
        <dbReference type="SAM" id="MobiDB-lite"/>
    </source>
</evidence>
<evidence type="ECO:0000305" key="3"/>
<keyword id="KW-1185">Reference proteome</keyword>
<sequence>MRNKNIIMLLMSSLILSGCGPQPENKESQQQQPSTPTEQQVLAAQQAAIKEAEQSAAAAKALAQQEVQQYSDKQALQGRLQEAPTFARAAKAKATHIANPGTARYQQFDDNPVKQVAQNPLATFSLDVDTGSYANVRRFLNQGLLPPPDAVRVEEIVNYFPSDWDIKDKQSIPASKPIPFAMRYELAPAPWNEQRTLLKVDILAKDRKSEELPASNLVFLIDTSGSMISDERLPLIQSSLKLLVKELREQDNIAIVTYAGDSRIALPSISGSHKAEINAAIDSLDAEGSTNGGAGLELAYQQATKGFIKGGINRILLATDGDFNVGIDDPKSIESMVKKQRESGVTLSTFGVGNSNYNEAMMVRIADVGNGNYSYIDTLSEAQKVLNSEMRQMLITVAKDVKAQIEFNPAWVTEYRQIGYEKRQLRVEHFNNDNVDAGDIGAGKHITLLFELTLNGQKASIDKLRYAPDNKLAKSDKTKELAWLKIRWKYPQGKESQLVEFPLGPTINAPSEDMRFRAAVAAYGQKLRGSEYLNNTSWQQIKQWAQQAKGEDPQGYRAEFIRLIELADGVTDISQ</sequence>
<reference key="1">
    <citation type="journal article" date="1997" name="Science">
        <title>The complete genome sequence of Escherichia coli K-12.</title>
        <authorList>
            <person name="Blattner F.R."/>
            <person name="Plunkett G. III"/>
            <person name="Bloch C.A."/>
            <person name="Perna N.T."/>
            <person name="Burland V."/>
            <person name="Riley M."/>
            <person name="Collado-Vides J."/>
            <person name="Glasner J.D."/>
            <person name="Rode C.K."/>
            <person name="Mayhew G.F."/>
            <person name="Gregor J."/>
            <person name="Davis N.W."/>
            <person name="Kirkpatrick H.A."/>
            <person name="Goeden M.A."/>
            <person name="Rose D.J."/>
            <person name="Mau B."/>
            <person name="Shao Y."/>
        </authorList>
    </citation>
    <scope>NUCLEOTIDE SEQUENCE [LARGE SCALE GENOMIC DNA]</scope>
    <source>
        <strain>K12 / MG1655 / ATCC 47076</strain>
    </source>
</reference>
<reference key="2">
    <citation type="journal article" date="2006" name="Mol. Syst. Biol.">
        <title>Highly accurate genome sequences of Escherichia coli K-12 strains MG1655 and W3110.</title>
        <authorList>
            <person name="Hayashi K."/>
            <person name="Morooka N."/>
            <person name="Yamamoto Y."/>
            <person name="Fujita K."/>
            <person name="Isono K."/>
            <person name="Choi S."/>
            <person name="Ohtsubo E."/>
            <person name="Baba T."/>
            <person name="Wanner B.L."/>
            <person name="Mori H."/>
            <person name="Horiuchi T."/>
        </authorList>
    </citation>
    <scope>NUCLEOTIDE SEQUENCE [LARGE SCALE GENOMIC DNA]</scope>
    <source>
        <strain>K12 / W3110 / ATCC 27325 / DSM 5911</strain>
    </source>
</reference>
<protein>
    <recommendedName>
        <fullName>Uncharacterized protein YfbK</fullName>
    </recommendedName>
</protein>
<gene>
    <name type="primary">yfbK</name>
    <name type="ordered locus">b2270</name>
    <name type="ordered locus">JW2265</name>
</gene>
<name>YFBK_ECOLI</name>
<dbReference type="EMBL" id="U00096">
    <property type="protein sequence ID" value="AAC75330.1"/>
    <property type="molecule type" value="Genomic_DNA"/>
</dbReference>
<dbReference type="EMBL" id="AP009048">
    <property type="protein sequence ID" value="BAE76678.1"/>
    <property type="molecule type" value="Genomic_DNA"/>
</dbReference>
<dbReference type="PIR" id="D64998">
    <property type="entry name" value="D64998"/>
</dbReference>
<dbReference type="RefSeq" id="NP_416773.1">
    <property type="nucleotide sequence ID" value="NC_000913.3"/>
</dbReference>
<dbReference type="RefSeq" id="WP_001244806.1">
    <property type="nucleotide sequence ID" value="NZ_LN832404.1"/>
</dbReference>
<dbReference type="SMR" id="P76481"/>
<dbReference type="BioGRID" id="4261772">
    <property type="interactions" value="21"/>
</dbReference>
<dbReference type="FunCoup" id="P76481">
    <property type="interactions" value="15"/>
</dbReference>
<dbReference type="IntAct" id="P76481">
    <property type="interactions" value="2"/>
</dbReference>
<dbReference type="STRING" id="511145.b2270"/>
<dbReference type="TCDB" id="1.A.13.2.3">
    <property type="family name" value="the epithelial chloride channel (e-clc) family"/>
</dbReference>
<dbReference type="jPOST" id="P76481"/>
<dbReference type="PaxDb" id="511145-b2270"/>
<dbReference type="EnsemblBacteria" id="AAC75330">
    <property type="protein sequence ID" value="AAC75330"/>
    <property type="gene ID" value="b2270"/>
</dbReference>
<dbReference type="GeneID" id="946743"/>
<dbReference type="KEGG" id="ecj:JW2265"/>
<dbReference type="KEGG" id="eco:b2270"/>
<dbReference type="KEGG" id="ecoc:C3026_12675"/>
<dbReference type="PATRIC" id="fig|511145.12.peg.2363"/>
<dbReference type="EchoBASE" id="EB3848"/>
<dbReference type="eggNOG" id="COG2304">
    <property type="taxonomic scope" value="Bacteria"/>
</dbReference>
<dbReference type="HOGENOM" id="CLU_019123_3_0_6"/>
<dbReference type="InParanoid" id="P76481"/>
<dbReference type="OMA" id="SHYLHQF"/>
<dbReference type="OrthoDB" id="9805121at2"/>
<dbReference type="PhylomeDB" id="P76481"/>
<dbReference type="BioCyc" id="EcoCyc:G7177-MONOMER"/>
<dbReference type="PRO" id="PR:P76481"/>
<dbReference type="Proteomes" id="UP000000625">
    <property type="component" value="Chromosome"/>
</dbReference>
<dbReference type="CDD" id="cd01465">
    <property type="entry name" value="vWA_subgroup"/>
    <property type="match status" value="1"/>
</dbReference>
<dbReference type="Gene3D" id="3.40.50.410">
    <property type="entry name" value="von Willebrand factor, type A domain"/>
    <property type="match status" value="1"/>
</dbReference>
<dbReference type="InterPro" id="IPR051173">
    <property type="entry name" value="Ca_channel_alpha-2/delta"/>
</dbReference>
<dbReference type="InterPro" id="IPR022156">
    <property type="entry name" value="Uncharacterised_YfbK_N"/>
</dbReference>
<dbReference type="InterPro" id="IPR002035">
    <property type="entry name" value="VWF_A"/>
</dbReference>
<dbReference type="InterPro" id="IPR036465">
    <property type="entry name" value="vWFA_dom_sf"/>
</dbReference>
<dbReference type="InterPro" id="IPR021908">
    <property type="entry name" value="YfbK_C"/>
</dbReference>
<dbReference type="PANTHER" id="PTHR10166:SF37">
    <property type="entry name" value="STOLID, ISOFORM H"/>
    <property type="match status" value="1"/>
</dbReference>
<dbReference type="PANTHER" id="PTHR10166">
    <property type="entry name" value="VOLTAGE-DEPENDENT CALCIUM CHANNEL SUBUNIT ALPHA-2/DELTA-RELATED"/>
    <property type="match status" value="1"/>
</dbReference>
<dbReference type="Pfam" id="PF00092">
    <property type="entry name" value="VWA"/>
    <property type="match status" value="1"/>
</dbReference>
<dbReference type="Pfam" id="PF12450">
    <property type="entry name" value="vWF_A"/>
    <property type="match status" value="1"/>
</dbReference>
<dbReference type="Pfam" id="PF12034">
    <property type="entry name" value="YfbK_C"/>
    <property type="match status" value="1"/>
</dbReference>
<dbReference type="SMART" id="SM00327">
    <property type="entry name" value="VWA"/>
    <property type="match status" value="1"/>
</dbReference>
<dbReference type="SUPFAM" id="SSF53300">
    <property type="entry name" value="vWA-like"/>
    <property type="match status" value="1"/>
</dbReference>
<dbReference type="PROSITE" id="PS51257">
    <property type="entry name" value="PROKAR_LIPOPROTEIN"/>
    <property type="match status" value="1"/>
</dbReference>
<dbReference type="PROSITE" id="PS50234">
    <property type="entry name" value="VWFA"/>
    <property type="match status" value="1"/>
</dbReference>
<proteinExistence type="predicted"/>
<accession>P76481</accession>
<accession>Q2MAM8</accession>
<organism>
    <name type="scientific">Escherichia coli (strain K12)</name>
    <dbReference type="NCBI Taxonomy" id="83333"/>
    <lineage>
        <taxon>Bacteria</taxon>
        <taxon>Pseudomonadati</taxon>
        <taxon>Pseudomonadota</taxon>
        <taxon>Gammaproteobacteria</taxon>
        <taxon>Enterobacterales</taxon>
        <taxon>Enterobacteriaceae</taxon>
        <taxon>Escherichia</taxon>
    </lineage>
</organism>
<comment type="similarity">
    <text evidence="3">To Synechocystis PCC 6803 sll0103.</text>
</comment>